<dbReference type="EMBL" id="CP000749">
    <property type="protein sequence ID" value="ABR72501.1"/>
    <property type="molecule type" value="Genomic_DNA"/>
</dbReference>
<dbReference type="SMR" id="A6W1C2"/>
<dbReference type="STRING" id="400668.Mmwyl1_3599"/>
<dbReference type="KEGG" id="mmw:Mmwyl1_3599"/>
<dbReference type="eggNOG" id="COG0216">
    <property type="taxonomic scope" value="Bacteria"/>
</dbReference>
<dbReference type="HOGENOM" id="CLU_036856_0_1_6"/>
<dbReference type="OrthoDB" id="9806673at2"/>
<dbReference type="GO" id="GO:0005737">
    <property type="term" value="C:cytoplasm"/>
    <property type="evidence" value="ECO:0007669"/>
    <property type="project" value="UniProtKB-SubCell"/>
</dbReference>
<dbReference type="GO" id="GO:0016149">
    <property type="term" value="F:translation release factor activity, codon specific"/>
    <property type="evidence" value="ECO:0007669"/>
    <property type="project" value="UniProtKB-UniRule"/>
</dbReference>
<dbReference type="FunFam" id="3.30.160.20:FF:000004">
    <property type="entry name" value="Peptide chain release factor 1"/>
    <property type="match status" value="1"/>
</dbReference>
<dbReference type="FunFam" id="3.30.70.1660:FF:000002">
    <property type="entry name" value="Peptide chain release factor 1"/>
    <property type="match status" value="1"/>
</dbReference>
<dbReference type="FunFam" id="3.30.70.1660:FF:000004">
    <property type="entry name" value="Peptide chain release factor 1"/>
    <property type="match status" value="1"/>
</dbReference>
<dbReference type="Gene3D" id="3.30.160.20">
    <property type="match status" value="1"/>
</dbReference>
<dbReference type="Gene3D" id="3.30.70.1660">
    <property type="match status" value="2"/>
</dbReference>
<dbReference type="Gene3D" id="6.10.140.1950">
    <property type="match status" value="1"/>
</dbReference>
<dbReference type="HAMAP" id="MF_00093">
    <property type="entry name" value="Rel_fac_1"/>
    <property type="match status" value="1"/>
</dbReference>
<dbReference type="InterPro" id="IPR005139">
    <property type="entry name" value="PCRF"/>
</dbReference>
<dbReference type="InterPro" id="IPR000352">
    <property type="entry name" value="Pep_chain_release_fac_I"/>
</dbReference>
<dbReference type="InterPro" id="IPR045853">
    <property type="entry name" value="Pep_chain_release_fac_I_sf"/>
</dbReference>
<dbReference type="InterPro" id="IPR050057">
    <property type="entry name" value="Prokaryotic/Mito_RF"/>
</dbReference>
<dbReference type="InterPro" id="IPR004373">
    <property type="entry name" value="RF-1"/>
</dbReference>
<dbReference type="NCBIfam" id="TIGR00019">
    <property type="entry name" value="prfA"/>
    <property type="match status" value="1"/>
</dbReference>
<dbReference type="NCBIfam" id="NF001859">
    <property type="entry name" value="PRK00591.1"/>
    <property type="match status" value="1"/>
</dbReference>
<dbReference type="PANTHER" id="PTHR43804">
    <property type="entry name" value="LD18447P"/>
    <property type="match status" value="1"/>
</dbReference>
<dbReference type="PANTHER" id="PTHR43804:SF7">
    <property type="entry name" value="LD18447P"/>
    <property type="match status" value="1"/>
</dbReference>
<dbReference type="Pfam" id="PF03462">
    <property type="entry name" value="PCRF"/>
    <property type="match status" value="1"/>
</dbReference>
<dbReference type="Pfam" id="PF00472">
    <property type="entry name" value="RF-1"/>
    <property type="match status" value="1"/>
</dbReference>
<dbReference type="SMART" id="SM00937">
    <property type="entry name" value="PCRF"/>
    <property type="match status" value="1"/>
</dbReference>
<dbReference type="SUPFAM" id="SSF75620">
    <property type="entry name" value="Release factor"/>
    <property type="match status" value="1"/>
</dbReference>
<dbReference type="PROSITE" id="PS00745">
    <property type="entry name" value="RF_PROK_I"/>
    <property type="match status" value="1"/>
</dbReference>
<keyword id="KW-0963">Cytoplasm</keyword>
<keyword id="KW-0488">Methylation</keyword>
<keyword id="KW-0648">Protein biosynthesis</keyword>
<proteinExistence type="inferred from homology"/>
<organism>
    <name type="scientific">Marinomonas sp. (strain MWYL1)</name>
    <dbReference type="NCBI Taxonomy" id="400668"/>
    <lineage>
        <taxon>Bacteria</taxon>
        <taxon>Pseudomonadati</taxon>
        <taxon>Pseudomonadota</taxon>
        <taxon>Gammaproteobacteria</taxon>
        <taxon>Oceanospirillales</taxon>
        <taxon>Oceanospirillaceae</taxon>
        <taxon>Marinomonas</taxon>
    </lineage>
</organism>
<gene>
    <name evidence="1" type="primary">prfA</name>
    <name type="ordered locus">Mmwyl1_3599</name>
</gene>
<accession>A6W1C2</accession>
<comment type="function">
    <text evidence="1">Peptide chain release factor 1 directs the termination of translation in response to the peptide chain termination codons UAG and UAA.</text>
</comment>
<comment type="subcellular location">
    <subcellularLocation>
        <location evidence="1">Cytoplasm</location>
    </subcellularLocation>
</comment>
<comment type="PTM">
    <text evidence="1">Methylated by PrmC. Methylation increases the termination efficiency of RF1.</text>
</comment>
<comment type="similarity">
    <text evidence="1">Belongs to the prokaryotic/mitochondrial release factor family.</text>
</comment>
<evidence type="ECO:0000255" key="1">
    <source>
        <dbReference type="HAMAP-Rule" id="MF_00093"/>
    </source>
</evidence>
<name>RF1_MARMS</name>
<sequence length="362" mass="40361">MKESIKLKLESLSDRYDELAALLGVAEVIMDQDLFRAYSKEYAELEPVVKCFNEFQQIDENIAEAELMMTDADPDIKEMGVEEYKAGLAQKEELQLVLQKLLLPKDPNDSRNVFLEVRAGTGGDEASIFSGDLFRMYSRYAETQRWKVEIVSASDGEHGGYKEVIARIVGEGAYSKLKFESGAHRVQRVPATESQGRIHTSACTVAVMPEMDEVDDIIINKSDLRIDTFRASGAGGQHVNKTDSAIRLTHIPTGVVVECQEERSQHKNRAKAMSLLASRLQAAELEKAASEQSETRKSLVGSGDRSERIRTYNYPQGRVTDHRINLTLYKLDEIVAGELDSLINPLVNEFQAEQLAALSGDN</sequence>
<reference key="1">
    <citation type="submission" date="2007-06" db="EMBL/GenBank/DDBJ databases">
        <title>Complete sequence of Marinomonas sp. MWYL1.</title>
        <authorList>
            <consortium name="US DOE Joint Genome Institute"/>
            <person name="Copeland A."/>
            <person name="Lucas S."/>
            <person name="Lapidus A."/>
            <person name="Barry K."/>
            <person name="Glavina del Rio T."/>
            <person name="Dalin E."/>
            <person name="Tice H."/>
            <person name="Pitluck S."/>
            <person name="Kiss H."/>
            <person name="Brettin T."/>
            <person name="Bruce D."/>
            <person name="Detter J.C."/>
            <person name="Han C."/>
            <person name="Schmutz J."/>
            <person name="Larimer F."/>
            <person name="Land M."/>
            <person name="Hauser L."/>
            <person name="Kyrpides N."/>
            <person name="Kim E."/>
            <person name="Johnston A.W.B."/>
            <person name="Todd J.D."/>
            <person name="Rogers R."/>
            <person name="Wexler M."/>
            <person name="Bond P.L."/>
            <person name="Li Y."/>
            <person name="Richardson P."/>
        </authorList>
    </citation>
    <scope>NUCLEOTIDE SEQUENCE [LARGE SCALE GENOMIC DNA]</scope>
    <source>
        <strain>MWYL1</strain>
    </source>
</reference>
<feature type="chain" id="PRO_1000075502" description="Peptide chain release factor 1">
    <location>
        <begin position="1"/>
        <end position="362"/>
    </location>
</feature>
<feature type="modified residue" description="N5-methylglutamine" evidence="1">
    <location>
        <position position="237"/>
    </location>
</feature>
<protein>
    <recommendedName>
        <fullName evidence="1">Peptide chain release factor 1</fullName>
        <shortName evidence="1">RF-1</shortName>
    </recommendedName>
</protein>